<dbReference type="EC" id="2.7.11.1" evidence="3"/>
<dbReference type="EMBL" id="M59456">
    <property type="protein sequence ID" value="AAA48691.1"/>
    <property type="molecule type" value="mRNA"/>
</dbReference>
<dbReference type="PIR" id="A38611">
    <property type="entry name" value="A38611"/>
</dbReference>
<dbReference type="RefSeq" id="NP_001002242.1">
    <property type="nucleotide sequence ID" value="NM_001002242.2"/>
</dbReference>
<dbReference type="RefSeq" id="XP_015151905.1">
    <property type="nucleotide sequence ID" value="XM_015296419.4"/>
</dbReference>
<dbReference type="RefSeq" id="XP_024998034.1">
    <property type="nucleotide sequence ID" value="XM_025142266.3"/>
</dbReference>
<dbReference type="RefSeq" id="XP_046786814.1">
    <property type="nucleotide sequence ID" value="XM_046930858.1"/>
</dbReference>
<dbReference type="RefSeq" id="XP_046786815.1">
    <property type="nucleotide sequence ID" value="XM_046930859.1"/>
</dbReference>
<dbReference type="SMR" id="P21868"/>
<dbReference type="FunCoup" id="P21868">
    <property type="interactions" value="1812"/>
</dbReference>
<dbReference type="STRING" id="9031.ENSGALP00000009985"/>
<dbReference type="GlyGen" id="P21868">
    <property type="glycosylation" value="1 site"/>
</dbReference>
<dbReference type="PaxDb" id="9031-ENSGALP00000042162"/>
<dbReference type="GeneID" id="432370"/>
<dbReference type="KEGG" id="gga:432370"/>
<dbReference type="CTD" id="1457"/>
<dbReference type="VEuPathDB" id="HostDB:geneid_432370"/>
<dbReference type="eggNOG" id="KOG0668">
    <property type="taxonomic scope" value="Eukaryota"/>
</dbReference>
<dbReference type="HOGENOM" id="CLU_000288_70_4_1"/>
<dbReference type="InParanoid" id="P21868"/>
<dbReference type="OMA" id="ECHMIEW"/>
<dbReference type="OrthoDB" id="10254671at2759"/>
<dbReference type="PhylomeDB" id="P21868"/>
<dbReference type="TreeFam" id="TF300483"/>
<dbReference type="BRENDA" id="2.7.11.1">
    <property type="organism ID" value="1306"/>
</dbReference>
<dbReference type="Reactome" id="R-GGA-8939243">
    <property type="pathway name" value="RUNX1 interacts with co-factors whose precise effect on RUNX1 targets is not known"/>
</dbReference>
<dbReference type="PRO" id="PR:P21868"/>
<dbReference type="Proteomes" id="UP000000539">
    <property type="component" value="Chromosome 20"/>
</dbReference>
<dbReference type="Bgee" id="ENSGALG00000006197">
    <property type="expression patterns" value="Expressed in skeletal muscle tissue and 13 other cell types or tissues"/>
</dbReference>
<dbReference type="GO" id="GO:0005829">
    <property type="term" value="C:cytosol"/>
    <property type="evidence" value="ECO:0000318"/>
    <property type="project" value="GO_Central"/>
</dbReference>
<dbReference type="GO" id="GO:0005634">
    <property type="term" value="C:nucleus"/>
    <property type="evidence" value="ECO:0000318"/>
    <property type="project" value="GO_Central"/>
</dbReference>
<dbReference type="GO" id="GO:0005956">
    <property type="term" value="C:protein kinase CK2 complex"/>
    <property type="evidence" value="ECO:0000318"/>
    <property type="project" value="GO_Central"/>
</dbReference>
<dbReference type="GO" id="GO:0005524">
    <property type="term" value="F:ATP binding"/>
    <property type="evidence" value="ECO:0007669"/>
    <property type="project" value="UniProtKB-KW"/>
</dbReference>
<dbReference type="GO" id="GO:0106310">
    <property type="term" value="F:protein serine kinase activity"/>
    <property type="evidence" value="ECO:0007669"/>
    <property type="project" value="RHEA"/>
</dbReference>
<dbReference type="GO" id="GO:0004674">
    <property type="term" value="F:protein serine/threonine kinase activity"/>
    <property type="evidence" value="ECO:0000250"/>
    <property type="project" value="UniProtKB"/>
</dbReference>
<dbReference type="GO" id="GO:0006302">
    <property type="term" value="P:double-strand break repair"/>
    <property type="evidence" value="ECO:0000250"/>
    <property type="project" value="UniProtKB"/>
</dbReference>
<dbReference type="GO" id="GO:1905337">
    <property type="term" value="P:positive regulation of aggrephagy"/>
    <property type="evidence" value="ECO:0000250"/>
    <property type="project" value="UniProtKB"/>
</dbReference>
<dbReference type="GO" id="GO:0051726">
    <property type="term" value="P:regulation of cell cycle"/>
    <property type="evidence" value="ECO:0000318"/>
    <property type="project" value="GO_Central"/>
</dbReference>
<dbReference type="GO" id="GO:0048511">
    <property type="term" value="P:rhythmic process"/>
    <property type="evidence" value="ECO:0007669"/>
    <property type="project" value="UniProtKB-KW"/>
</dbReference>
<dbReference type="GO" id="GO:0016055">
    <property type="term" value="P:Wnt signaling pathway"/>
    <property type="evidence" value="ECO:0007669"/>
    <property type="project" value="UniProtKB-KW"/>
</dbReference>
<dbReference type="CDD" id="cd14132">
    <property type="entry name" value="STKc_CK2_alpha"/>
    <property type="match status" value="1"/>
</dbReference>
<dbReference type="FunFam" id="1.10.510.10:FF:000059">
    <property type="entry name" value="Casein kinase II subunit alpha"/>
    <property type="match status" value="1"/>
</dbReference>
<dbReference type="FunFam" id="3.30.200.20:FF:000088">
    <property type="entry name" value="Casein kinase II subunit alpha"/>
    <property type="match status" value="1"/>
</dbReference>
<dbReference type="Gene3D" id="3.30.200.20">
    <property type="entry name" value="Phosphorylase Kinase, domain 1"/>
    <property type="match status" value="1"/>
</dbReference>
<dbReference type="Gene3D" id="1.10.510.10">
    <property type="entry name" value="Transferase(Phosphotransferase) domain 1"/>
    <property type="match status" value="1"/>
</dbReference>
<dbReference type="InterPro" id="IPR045216">
    <property type="entry name" value="CK2_alpha"/>
</dbReference>
<dbReference type="InterPro" id="IPR011009">
    <property type="entry name" value="Kinase-like_dom_sf"/>
</dbReference>
<dbReference type="InterPro" id="IPR000719">
    <property type="entry name" value="Prot_kinase_dom"/>
</dbReference>
<dbReference type="InterPro" id="IPR017441">
    <property type="entry name" value="Protein_kinase_ATP_BS"/>
</dbReference>
<dbReference type="InterPro" id="IPR008271">
    <property type="entry name" value="Ser/Thr_kinase_AS"/>
</dbReference>
<dbReference type="PANTHER" id="PTHR24054">
    <property type="entry name" value="CASEIN KINASE II SUBUNIT ALPHA"/>
    <property type="match status" value="1"/>
</dbReference>
<dbReference type="PANTHER" id="PTHR24054:SF16">
    <property type="entry name" value="CASEIN KINASE II SUBUNIT ALPHA-RELATED"/>
    <property type="match status" value="1"/>
</dbReference>
<dbReference type="Pfam" id="PF00069">
    <property type="entry name" value="Pkinase"/>
    <property type="match status" value="1"/>
</dbReference>
<dbReference type="SMART" id="SM00220">
    <property type="entry name" value="S_TKc"/>
    <property type="match status" value="1"/>
</dbReference>
<dbReference type="SUPFAM" id="SSF56112">
    <property type="entry name" value="Protein kinase-like (PK-like)"/>
    <property type="match status" value="1"/>
</dbReference>
<dbReference type="PROSITE" id="PS00107">
    <property type="entry name" value="PROTEIN_KINASE_ATP"/>
    <property type="match status" value="1"/>
</dbReference>
<dbReference type="PROSITE" id="PS50011">
    <property type="entry name" value="PROTEIN_KINASE_DOM"/>
    <property type="match status" value="1"/>
</dbReference>
<dbReference type="PROSITE" id="PS00108">
    <property type="entry name" value="PROTEIN_KINASE_ST"/>
    <property type="match status" value="1"/>
</dbReference>
<sequence>MSGPVPSRARVYTDVNTHRPREYWDYESHVVEWGNQDDYQLVRKLGRGKYSEVFEAINITNNEKVVVKILKPVKKKKIKREIKILENLRGGPNIITLADIVKDPVSRTPALVFEHVNNTDFKQLYQTLTDYDIRFYMYEILKALDYCHSMGIMHRDVKPHNVMIDHEHRKLRLIDWGLAEFYHPGQEYNVRVASRYFKGPELLVDYQMYDYSLDMWSLGCMLASMIFRKEPFFHGHDNYDQLVRIAKVLGTEDLYDYIDKYNIELDPRFNDILGRHSRKRWERFVHSENQHLVSPEALDFLDKLLRYDHQSRLTAREAMEHPYFYPIVKDQARMGSSNMPGGSTPVSSASMMSGISSVPTPSPLGPLAGSPVISATTTLGMPVPAAAGAQQ</sequence>
<comment type="function">
    <text evidence="2 3">Catalytic subunit of a constitutively active serine/threonine-protein kinase complex that phosphorylates a large number of substrates containing acidic residues C-terminal to the phosphorylated serine or threonine. Regulates numerous cellular processes, such as cell cycle progression, apoptosis and transcription, as well as viral infection. May act as a regulatory node which integrates and coordinates numerous signals leading to an appropriate cellular response. During mitosis, functions as a component of the p53/TP53-dependent spindle assembly checkpoint (SAC) that maintains cyclin-B-CDK1 activity and G2 arrest in response to spindle damage. Can also negatively regulate apoptosis. Phosphorylates the caspases CASP9 and CASP2 and the apoptotic regulator NOL3. Phosphorylation protects CASP9 from cleavage and activation by CASP8, and inhibits the dimerization of CASP2 and activation of CASP8 (By similarity). Plays an important role in the circadian clock function by phosphorylating BMAL1 (By similarity).</text>
</comment>
<comment type="catalytic activity">
    <reaction evidence="3">
        <text>L-seryl-[protein] + ATP = O-phospho-L-seryl-[protein] + ADP + H(+)</text>
        <dbReference type="Rhea" id="RHEA:17989"/>
        <dbReference type="Rhea" id="RHEA-COMP:9863"/>
        <dbReference type="Rhea" id="RHEA-COMP:11604"/>
        <dbReference type="ChEBI" id="CHEBI:15378"/>
        <dbReference type="ChEBI" id="CHEBI:29999"/>
        <dbReference type="ChEBI" id="CHEBI:30616"/>
        <dbReference type="ChEBI" id="CHEBI:83421"/>
        <dbReference type="ChEBI" id="CHEBI:456216"/>
        <dbReference type="EC" id="2.7.11.1"/>
    </reaction>
    <physiologicalReaction direction="left-to-right" evidence="3">
        <dbReference type="Rhea" id="RHEA:17990"/>
    </physiologicalReaction>
</comment>
<comment type="catalytic activity">
    <reaction evidence="3">
        <text>L-threonyl-[protein] + ATP = O-phospho-L-threonyl-[protein] + ADP + H(+)</text>
        <dbReference type="Rhea" id="RHEA:46608"/>
        <dbReference type="Rhea" id="RHEA-COMP:11060"/>
        <dbReference type="Rhea" id="RHEA-COMP:11605"/>
        <dbReference type="ChEBI" id="CHEBI:15378"/>
        <dbReference type="ChEBI" id="CHEBI:30013"/>
        <dbReference type="ChEBI" id="CHEBI:30616"/>
        <dbReference type="ChEBI" id="CHEBI:61977"/>
        <dbReference type="ChEBI" id="CHEBI:456216"/>
        <dbReference type="EC" id="2.7.11.1"/>
    </reaction>
</comment>
<comment type="subunit">
    <text evidence="1">Tetramer composed of an alpha chain, an alpha' and two beta chains. Interacts with RNPS1 (By similarity).</text>
</comment>
<comment type="subcellular location">
    <subcellularLocation>
        <location evidence="3">Nucleus</location>
    </subcellularLocation>
</comment>
<comment type="similarity">
    <text evidence="4">Belongs to the protein kinase superfamily. Ser/Thr protein kinase family. CK2 subfamily.</text>
</comment>
<protein>
    <recommendedName>
        <fullName>Casein kinase II subunit alpha</fullName>
        <shortName>CK II</shortName>
        <ecNumber evidence="3">2.7.11.1</ecNumber>
    </recommendedName>
</protein>
<reference key="1">
    <citation type="journal article" date="1991" name="J. Biol. Chem.">
        <title>Casein kinase II. cDNA sequences, developmental expression, and tissue distribution of mRNAs for alpha, alpha', and beta subunits of the chicken enzyme.</title>
        <authorList>
            <person name="Maridor G."/>
            <person name="Park W."/>
            <person name="Krek W."/>
            <person name="Nigg E.A."/>
        </authorList>
    </citation>
    <scope>NUCLEOTIDE SEQUENCE [MRNA]</scope>
</reference>
<accession>P21868</accession>
<keyword id="KW-0067">ATP-binding</keyword>
<keyword id="KW-0090">Biological rhythms</keyword>
<keyword id="KW-0418">Kinase</keyword>
<keyword id="KW-0547">Nucleotide-binding</keyword>
<keyword id="KW-0539">Nucleus</keyword>
<keyword id="KW-1185">Reference proteome</keyword>
<keyword id="KW-0723">Serine/threonine-protein kinase</keyword>
<keyword id="KW-0808">Transferase</keyword>
<keyword id="KW-0879">Wnt signaling pathway</keyword>
<proteinExistence type="evidence at transcript level"/>
<name>CSK21_CHICK</name>
<organism>
    <name type="scientific">Gallus gallus</name>
    <name type="common">Chicken</name>
    <dbReference type="NCBI Taxonomy" id="9031"/>
    <lineage>
        <taxon>Eukaryota</taxon>
        <taxon>Metazoa</taxon>
        <taxon>Chordata</taxon>
        <taxon>Craniata</taxon>
        <taxon>Vertebrata</taxon>
        <taxon>Euteleostomi</taxon>
        <taxon>Archelosauria</taxon>
        <taxon>Archosauria</taxon>
        <taxon>Dinosauria</taxon>
        <taxon>Saurischia</taxon>
        <taxon>Theropoda</taxon>
        <taxon>Coelurosauria</taxon>
        <taxon>Aves</taxon>
        <taxon>Neognathae</taxon>
        <taxon>Galloanserae</taxon>
        <taxon>Galliformes</taxon>
        <taxon>Phasianidae</taxon>
        <taxon>Phasianinae</taxon>
        <taxon>Gallus</taxon>
    </lineage>
</organism>
<feature type="chain" id="PRO_0000085887" description="Casein kinase II subunit alpha">
    <location>
        <begin position="1"/>
        <end position="391"/>
    </location>
</feature>
<feature type="domain" description="Protein kinase" evidence="4">
    <location>
        <begin position="39"/>
        <end position="324"/>
    </location>
</feature>
<feature type="region of interest" description="Interaction with beta subunit" evidence="1">
    <location>
        <begin position="36"/>
        <end position="41"/>
    </location>
</feature>
<feature type="region of interest" description="Disordered" evidence="6">
    <location>
        <begin position="335"/>
        <end position="363"/>
    </location>
</feature>
<feature type="compositionally biased region" description="Polar residues" evidence="6">
    <location>
        <begin position="335"/>
        <end position="346"/>
    </location>
</feature>
<feature type="compositionally biased region" description="Low complexity" evidence="6">
    <location>
        <begin position="347"/>
        <end position="357"/>
    </location>
</feature>
<feature type="active site" description="Proton acceptor" evidence="4 5">
    <location>
        <position position="156"/>
    </location>
</feature>
<feature type="binding site" evidence="4">
    <location>
        <begin position="45"/>
        <end position="53"/>
    </location>
    <ligand>
        <name>ATP</name>
        <dbReference type="ChEBI" id="CHEBI:30616"/>
    </ligand>
</feature>
<feature type="binding site" evidence="4">
    <location>
        <position position="68"/>
    </location>
    <ligand>
        <name>ATP</name>
        <dbReference type="ChEBI" id="CHEBI:30616"/>
    </ligand>
</feature>
<evidence type="ECO:0000250" key="1"/>
<evidence type="ECO:0000250" key="2">
    <source>
        <dbReference type="UniProtKB" id="P19139"/>
    </source>
</evidence>
<evidence type="ECO:0000250" key="3">
    <source>
        <dbReference type="UniProtKB" id="P68400"/>
    </source>
</evidence>
<evidence type="ECO:0000255" key="4">
    <source>
        <dbReference type="PROSITE-ProRule" id="PRU00159"/>
    </source>
</evidence>
<evidence type="ECO:0000255" key="5">
    <source>
        <dbReference type="PROSITE-ProRule" id="PRU10027"/>
    </source>
</evidence>
<evidence type="ECO:0000256" key="6">
    <source>
        <dbReference type="SAM" id="MobiDB-lite"/>
    </source>
</evidence>
<gene>
    <name type="primary">CSNK2A1</name>
</gene>